<name>ERPA_CUPMC</name>
<evidence type="ECO:0000255" key="1">
    <source>
        <dbReference type="HAMAP-Rule" id="MF_01380"/>
    </source>
</evidence>
<protein>
    <recommendedName>
        <fullName evidence="1">Putative iron-sulfur cluster insertion protein ErpA</fullName>
    </recommendedName>
</protein>
<sequence length="122" mass="13095">MNAVAEAPATEDVPAPFVFTDSAADKVKQLIEEEGNAELKLRVFVQGGGCSGFQYGFTFDEDVNEDDTTMVKNGVTLLIDSMSYQYLVGAEIDYKEDINGAQFVIKNPNASTTCGCGSSFSV</sequence>
<dbReference type="EMBL" id="CP000352">
    <property type="protein sequence ID" value="ABF07300.1"/>
    <property type="molecule type" value="Genomic_DNA"/>
</dbReference>
<dbReference type="RefSeq" id="WP_008646009.1">
    <property type="nucleotide sequence ID" value="NC_007973.1"/>
</dbReference>
<dbReference type="SMR" id="Q1LRC6"/>
<dbReference type="STRING" id="266264.Rmet_0414"/>
<dbReference type="GeneID" id="60824016"/>
<dbReference type="KEGG" id="rme:Rmet_0414"/>
<dbReference type="eggNOG" id="COG0316">
    <property type="taxonomic scope" value="Bacteria"/>
</dbReference>
<dbReference type="HOGENOM" id="CLU_069054_5_3_4"/>
<dbReference type="Proteomes" id="UP000002429">
    <property type="component" value="Chromosome"/>
</dbReference>
<dbReference type="GO" id="GO:0051537">
    <property type="term" value="F:2 iron, 2 sulfur cluster binding"/>
    <property type="evidence" value="ECO:0007669"/>
    <property type="project" value="TreeGrafter"/>
</dbReference>
<dbReference type="GO" id="GO:0051539">
    <property type="term" value="F:4 iron, 4 sulfur cluster binding"/>
    <property type="evidence" value="ECO:0007669"/>
    <property type="project" value="TreeGrafter"/>
</dbReference>
<dbReference type="GO" id="GO:0005506">
    <property type="term" value="F:iron ion binding"/>
    <property type="evidence" value="ECO:0007669"/>
    <property type="project" value="UniProtKB-UniRule"/>
</dbReference>
<dbReference type="GO" id="GO:0016226">
    <property type="term" value="P:iron-sulfur cluster assembly"/>
    <property type="evidence" value="ECO:0007669"/>
    <property type="project" value="UniProtKB-UniRule"/>
</dbReference>
<dbReference type="FunFam" id="2.60.300.12:FF:000002">
    <property type="entry name" value="Iron-sulfur cluster insertion protein ErpA"/>
    <property type="match status" value="1"/>
</dbReference>
<dbReference type="Gene3D" id="2.60.300.12">
    <property type="entry name" value="HesB-like domain"/>
    <property type="match status" value="1"/>
</dbReference>
<dbReference type="HAMAP" id="MF_01380">
    <property type="entry name" value="Fe_S_insert_ErpA"/>
    <property type="match status" value="1"/>
</dbReference>
<dbReference type="InterPro" id="IPR000361">
    <property type="entry name" value="FeS_biogenesis"/>
</dbReference>
<dbReference type="InterPro" id="IPR016092">
    <property type="entry name" value="FeS_cluster_insertion"/>
</dbReference>
<dbReference type="InterPro" id="IPR017870">
    <property type="entry name" value="FeS_cluster_insertion_CS"/>
</dbReference>
<dbReference type="InterPro" id="IPR023063">
    <property type="entry name" value="FeS_cluster_insertion_RrpA"/>
</dbReference>
<dbReference type="InterPro" id="IPR035903">
    <property type="entry name" value="HesB-like_dom_sf"/>
</dbReference>
<dbReference type="NCBIfam" id="TIGR00049">
    <property type="entry name" value="iron-sulfur cluster assembly accessory protein"/>
    <property type="match status" value="1"/>
</dbReference>
<dbReference type="NCBIfam" id="NF010147">
    <property type="entry name" value="PRK13623.1"/>
    <property type="match status" value="1"/>
</dbReference>
<dbReference type="PANTHER" id="PTHR43011">
    <property type="entry name" value="IRON-SULFUR CLUSTER ASSEMBLY 2 HOMOLOG, MITOCHONDRIAL"/>
    <property type="match status" value="1"/>
</dbReference>
<dbReference type="PANTHER" id="PTHR43011:SF1">
    <property type="entry name" value="IRON-SULFUR CLUSTER ASSEMBLY 2 HOMOLOG, MITOCHONDRIAL"/>
    <property type="match status" value="1"/>
</dbReference>
<dbReference type="Pfam" id="PF01521">
    <property type="entry name" value="Fe-S_biosyn"/>
    <property type="match status" value="1"/>
</dbReference>
<dbReference type="SUPFAM" id="SSF89360">
    <property type="entry name" value="HesB-like domain"/>
    <property type="match status" value="1"/>
</dbReference>
<dbReference type="PROSITE" id="PS01152">
    <property type="entry name" value="HESB"/>
    <property type="match status" value="1"/>
</dbReference>
<feature type="chain" id="PRO_0000311538" description="Putative iron-sulfur cluster insertion protein ErpA">
    <location>
        <begin position="1"/>
        <end position="122"/>
    </location>
</feature>
<feature type="binding site" evidence="1">
    <location>
        <position position="50"/>
    </location>
    <ligand>
        <name>iron-sulfur cluster</name>
        <dbReference type="ChEBI" id="CHEBI:30408"/>
    </ligand>
</feature>
<feature type="binding site" evidence="1">
    <location>
        <position position="114"/>
    </location>
    <ligand>
        <name>iron-sulfur cluster</name>
        <dbReference type="ChEBI" id="CHEBI:30408"/>
    </ligand>
</feature>
<feature type="binding site" evidence="1">
    <location>
        <position position="116"/>
    </location>
    <ligand>
        <name>iron-sulfur cluster</name>
        <dbReference type="ChEBI" id="CHEBI:30408"/>
    </ligand>
</feature>
<proteinExistence type="inferred from homology"/>
<organism>
    <name type="scientific">Cupriavidus metallidurans (strain ATCC 43123 / DSM 2839 / NBRC 102507 / CH34)</name>
    <name type="common">Ralstonia metallidurans</name>
    <dbReference type="NCBI Taxonomy" id="266264"/>
    <lineage>
        <taxon>Bacteria</taxon>
        <taxon>Pseudomonadati</taxon>
        <taxon>Pseudomonadota</taxon>
        <taxon>Betaproteobacteria</taxon>
        <taxon>Burkholderiales</taxon>
        <taxon>Burkholderiaceae</taxon>
        <taxon>Cupriavidus</taxon>
    </lineage>
</organism>
<keyword id="KW-0408">Iron</keyword>
<keyword id="KW-0411">Iron-sulfur</keyword>
<keyword id="KW-0479">Metal-binding</keyword>
<keyword id="KW-1185">Reference proteome</keyword>
<gene>
    <name evidence="1" type="primary">erpA</name>
    <name type="ordered locus">Rmet_0414</name>
</gene>
<reference key="1">
    <citation type="journal article" date="2010" name="PLoS ONE">
        <title>The complete genome sequence of Cupriavidus metallidurans strain CH34, a master survivalist in harsh and anthropogenic environments.</title>
        <authorList>
            <person name="Janssen P.J."/>
            <person name="Van Houdt R."/>
            <person name="Moors H."/>
            <person name="Monsieurs P."/>
            <person name="Morin N."/>
            <person name="Michaux A."/>
            <person name="Benotmane M.A."/>
            <person name="Leys N."/>
            <person name="Vallaeys T."/>
            <person name="Lapidus A."/>
            <person name="Monchy S."/>
            <person name="Medigue C."/>
            <person name="Taghavi S."/>
            <person name="McCorkle S."/>
            <person name="Dunn J."/>
            <person name="van der Lelie D."/>
            <person name="Mergeay M."/>
        </authorList>
    </citation>
    <scope>NUCLEOTIDE SEQUENCE [LARGE SCALE GENOMIC DNA]</scope>
    <source>
        <strain>ATCC 43123 / DSM 2839 / NBRC 102507 / CH34</strain>
    </source>
</reference>
<comment type="function">
    <text evidence="1">Required for insertion of 4Fe-4S clusters.</text>
</comment>
<comment type="cofactor">
    <cofactor evidence="1">
        <name>iron-sulfur cluster</name>
        <dbReference type="ChEBI" id="CHEBI:30408"/>
    </cofactor>
    <text evidence="1">Binds 1 iron-sulfur cluster per subunit.</text>
</comment>
<comment type="subunit">
    <text evidence="1">Homodimer.</text>
</comment>
<comment type="similarity">
    <text evidence="1">Belongs to the HesB/IscA family.</text>
</comment>
<accession>Q1LRC6</accession>